<keyword id="KW-0963">Cytoplasm</keyword>
<keyword id="KW-0441">Lipid A biosynthesis</keyword>
<keyword id="KW-0444">Lipid biosynthesis</keyword>
<keyword id="KW-0443">Lipid metabolism</keyword>
<keyword id="KW-0456">Lyase</keyword>
<gene>
    <name evidence="1" type="primary">fabZ</name>
    <name type="ordered locus">Pmen_3042</name>
</gene>
<comment type="function">
    <text evidence="1">Involved in unsaturated fatty acids biosynthesis. Catalyzes the dehydration of short chain beta-hydroxyacyl-ACPs and long chain saturated and unsaturated beta-hydroxyacyl-ACPs.</text>
</comment>
<comment type="catalytic activity">
    <reaction evidence="1">
        <text>a (3R)-hydroxyacyl-[ACP] = a (2E)-enoyl-[ACP] + H2O</text>
        <dbReference type="Rhea" id="RHEA:13097"/>
        <dbReference type="Rhea" id="RHEA-COMP:9925"/>
        <dbReference type="Rhea" id="RHEA-COMP:9945"/>
        <dbReference type="ChEBI" id="CHEBI:15377"/>
        <dbReference type="ChEBI" id="CHEBI:78784"/>
        <dbReference type="ChEBI" id="CHEBI:78827"/>
        <dbReference type="EC" id="4.2.1.59"/>
    </reaction>
</comment>
<comment type="subcellular location">
    <subcellularLocation>
        <location evidence="1">Cytoplasm</location>
    </subcellularLocation>
</comment>
<comment type="similarity">
    <text evidence="1">Belongs to the thioester dehydratase family. FabZ subfamily.</text>
</comment>
<dbReference type="EC" id="4.2.1.59" evidence="1"/>
<dbReference type="EMBL" id="CP000680">
    <property type="protein sequence ID" value="ABP85796.1"/>
    <property type="molecule type" value="Genomic_DNA"/>
</dbReference>
<dbReference type="SMR" id="A4XWT0"/>
<dbReference type="STRING" id="399739.Pmen_3042"/>
<dbReference type="KEGG" id="pmy:Pmen_3042"/>
<dbReference type="eggNOG" id="COG0764">
    <property type="taxonomic scope" value="Bacteria"/>
</dbReference>
<dbReference type="HOGENOM" id="CLU_078912_1_0_6"/>
<dbReference type="OrthoDB" id="9772788at2"/>
<dbReference type="GO" id="GO:0005737">
    <property type="term" value="C:cytoplasm"/>
    <property type="evidence" value="ECO:0007669"/>
    <property type="project" value="UniProtKB-SubCell"/>
</dbReference>
<dbReference type="GO" id="GO:0016020">
    <property type="term" value="C:membrane"/>
    <property type="evidence" value="ECO:0007669"/>
    <property type="project" value="GOC"/>
</dbReference>
<dbReference type="GO" id="GO:0019171">
    <property type="term" value="F:(3R)-hydroxyacyl-[acyl-carrier-protein] dehydratase activity"/>
    <property type="evidence" value="ECO:0007669"/>
    <property type="project" value="UniProtKB-EC"/>
</dbReference>
<dbReference type="GO" id="GO:0006633">
    <property type="term" value="P:fatty acid biosynthetic process"/>
    <property type="evidence" value="ECO:0007669"/>
    <property type="project" value="UniProtKB-UniRule"/>
</dbReference>
<dbReference type="GO" id="GO:0009245">
    <property type="term" value="P:lipid A biosynthetic process"/>
    <property type="evidence" value="ECO:0007669"/>
    <property type="project" value="UniProtKB-UniRule"/>
</dbReference>
<dbReference type="CDD" id="cd01288">
    <property type="entry name" value="FabZ"/>
    <property type="match status" value="1"/>
</dbReference>
<dbReference type="FunFam" id="3.10.129.10:FF:000001">
    <property type="entry name" value="3-hydroxyacyl-[acyl-carrier-protein] dehydratase FabZ"/>
    <property type="match status" value="1"/>
</dbReference>
<dbReference type="Gene3D" id="3.10.129.10">
    <property type="entry name" value="Hotdog Thioesterase"/>
    <property type="match status" value="1"/>
</dbReference>
<dbReference type="HAMAP" id="MF_00406">
    <property type="entry name" value="FabZ"/>
    <property type="match status" value="1"/>
</dbReference>
<dbReference type="InterPro" id="IPR013114">
    <property type="entry name" value="FabA_FabZ"/>
</dbReference>
<dbReference type="InterPro" id="IPR010084">
    <property type="entry name" value="FabZ"/>
</dbReference>
<dbReference type="InterPro" id="IPR029069">
    <property type="entry name" value="HotDog_dom_sf"/>
</dbReference>
<dbReference type="NCBIfam" id="TIGR01750">
    <property type="entry name" value="fabZ"/>
    <property type="match status" value="1"/>
</dbReference>
<dbReference type="NCBIfam" id="NF000582">
    <property type="entry name" value="PRK00006.1"/>
    <property type="match status" value="1"/>
</dbReference>
<dbReference type="PANTHER" id="PTHR30272">
    <property type="entry name" value="3-HYDROXYACYL-[ACYL-CARRIER-PROTEIN] DEHYDRATASE"/>
    <property type="match status" value="1"/>
</dbReference>
<dbReference type="PANTHER" id="PTHR30272:SF1">
    <property type="entry name" value="3-HYDROXYACYL-[ACYL-CARRIER-PROTEIN] DEHYDRATASE"/>
    <property type="match status" value="1"/>
</dbReference>
<dbReference type="Pfam" id="PF07977">
    <property type="entry name" value="FabA"/>
    <property type="match status" value="1"/>
</dbReference>
<dbReference type="SUPFAM" id="SSF54637">
    <property type="entry name" value="Thioesterase/thiol ester dehydrase-isomerase"/>
    <property type="match status" value="1"/>
</dbReference>
<organism>
    <name type="scientific">Ectopseudomonas mendocina (strain ymp)</name>
    <name type="common">Pseudomonas mendocina</name>
    <dbReference type="NCBI Taxonomy" id="399739"/>
    <lineage>
        <taxon>Bacteria</taxon>
        <taxon>Pseudomonadati</taxon>
        <taxon>Pseudomonadota</taxon>
        <taxon>Gammaproteobacteria</taxon>
        <taxon>Pseudomonadales</taxon>
        <taxon>Pseudomonadaceae</taxon>
        <taxon>Ectopseudomonas</taxon>
    </lineage>
</organism>
<proteinExistence type="inferred from homology"/>
<feature type="chain" id="PRO_1000049853" description="3-hydroxyacyl-[acyl-carrier-protein] dehydratase FabZ">
    <location>
        <begin position="1"/>
        <end position="146"/>
    </location>
</feature>
<feature type="active site" evidence="1">
    <location>
        <position position="49"/>
    </location>
</feature>
<reference key="1">
    <citation type="submission" date="2007-04" db="EMBL/GenBank/DDBJ databases">
        <title>Complete sequence of Pseudomonas mendocina ymp.</title>
        <authorList>
            <consortium name="US DOE Joint Genome Institute"/>
            <person name="Copeland A."/>
            <person name="Lucas S."/>
            <person name="Lapidus A."/>
            <person name="Barry K."/>
            <person name="Glavina del Rio T."/>
            <person name="Dalin E."/>
            <person name="Tice H."/>
            <person name="Pitluck S."/>
            <person name="Kiss H."/>
            <person name="Brettin T."/>
            <person name="Detter J.C."/>
            <person name="Bruce D."/>
            <person name="Han C."/>
            <person name="Schmutz J."/>
            <person name="Larimer F."/>
            <person name="Land M."/>
            <person name="Hauser L."/>
            <person name="Kyrpides N."/>
            <person name="Mikhailova N."/>
            <person name="Hersman L."/>
            <person name="Dubois J."/>
            <person name="Maurice P."/>
            <person name="Richardson P."/>
        </authorList>
    </citation>
    <scope>NUCLEOTIDE SEQUENCE [LARGE SCALE GENOMIC DNA]</scope>
    <source>
        <strain>ymp</strain>
    </source>
</reference>
<protein>
    <recommendedName>
        <fullName evidence="1">3-hydroxyacyl-[acyl-carrier-protein] dehydratase FabZ</fullName>
        <ecNumber evidence="1">4.2.1.59</ecNumber>
    </recommendedName>
    <alternativeName>
        <fullName evidence="1">(3R)-hydroxymyristoyl-[acyl-carrier-protein] dehydratase</fullName>
        <shortName evidence="1">(3R)-hydroxymyristoyl-ACP dehydrase</shortName>
    </alternativeName>
    <alternativeName>
        <fullName evidence="1">Beta-hydroxyacyl-ACP dehydratase</fullName>
    </alternativeName>
</protein>
<accession>A4XWT0</accession>
<sequence length="146" mass="16668">MMDINEIREYLPHRYPFLLVDRVVDLDVEGKQIRAYKNVSINEPFFNGHFPEHPIMPGVLIIEAMAQAAGILGFKMMGVKPADGTLYYFVGSDKLRFRSPVLPGDQLTLEAKYLSDRRSIWKFECRATVDGKEVCSAEIICAERKL</sequence>
<evidence type="ECO:0000255" key="1">
    <source>
        <dbReference type="HAMAP-Rule" id="MF_00406"/>
    </source>
</evidence>
<name>FABZ_ECTM1</name>